<feature type="chain" id="PRO_0000069134" description="Beta-2 adrenergic receptor">
    <location>
        <begin position="1"/>
        <end position="418"/>
    </location>
</feature>
<feature type="topological domain" description="Extracellular" evidence="1">
    <location>
        <begin position="1"/>
        <end position="34"/>
    </location>
</feature>
<feature type="transmembrane region" description="Helical; Name=1" evidence="1">
    <location>
        <begin position="35"/>
        <end position="58"/>
    </location>
</feature>
<feature type="topological domain" description="Cytoplasmic" evidence="1">
    <location>
        <begin position="59"/>
        <end position="71"/>
    </location>
</feature>
<feature type="transmembrane region" description="Helical; Name=2" evidence="1">
    <location>
        <begin position="72"/>
        <end position="95"/>
    </location>
</feature>
<feature type="topological domain" description="Extracellular" evidence="1">
    <location>
        <begin position="96"/>
        <end position="106"/>
    </location>
</feature>
<feature type="transmembrane region" description="Helical; Name=3" evidence="1">
    <location>
        <begin position="107"/>
        <end position="129"/>
    </location>
</feature>
<feature type="topological domain" description="Cytoplasmic" evidence="1">
    <location>
        <begin position="130"/>
        <end position="150"/>
    </location>
</feature>
<feature type="transmembrane region" description="Helical; Name=4" evidence="1">
    <location>
        <begin position="151"/>
        <end position="174"/>
    </location>
</feature>
<feature type="topological domain" description="Extracellular" evidence="1">
    <location>
        <begin position="175"/>
        <end position="196"/>
    </location>
</feature>
<feature type="transmembrane region" description="Helical; Name=5" evidence="1">
    <location>
        <begin position="197"/>
        <end position="220"/>
    </location>
</feature>
<feature type="topological domain" description="Cytoplasmic" evidence="1">
    <location>
        <begin position="221"/>
        <end position="274"/>
    </location>
</feature>
<feature type="transmembrane region" description="Helical; Name=6" evidence="1">
    <location>
        <begin position="275"/>
        <end position="298"/>
    </location>
</feature>
<feature type="topological domain" description="Extracellular" evidence="1">
    <location>
        <begin position="299"/>
        <end position="305"/>
    </location>
</feature>
<feature type="transmembrane region" description="Helical; Name=7" evidence="1">
    <location>
        <begin position="306"/>
        <end position="329"/>
    </location>
</feature>
<feature type="topological domain" description="Cytoplasmic" evidence="1">
    <location>
        <begin position="330"/>
        <end position="418"/>
    </location>
</feature>
<feature type="region of interest" description="Disordered" evidence="5">
    <location>
        <begin position="1"/>
        <end position="23"/>
    </location>
</feature>
<feature type="short sequence motif" description="PDZ-binding">
    <location>
        <begin position="415"/>
        <end position="418"/>
    </location>
</feature>
<feature type="modified residue" description="Phosphotyrosine" evidence="2">
    <location>
        <position position="141"/>
    </location>
</feature>
<feature type="modified residue" description="Phosphoserine" evidence="2">
    <location>
        <position position="246"/>
    </location>
</feature>
<feature type="modified residue" description="Phosphoserine; by PKA" evidence="3">
    <location>
        <position position="261"/>
    </location>
</feature>
<feature type="modified residue" description="Phosphoserine; by PKA" evidence="3">
    <location>
        <position position="262"/>
    </location>
</feature>
<feature type="modified residue" description="Phosphoserine; by PKA" evidence="2">
    <location>
        <position position="345"/>
    </location>
</feature>
<feature type="modified residue" description="Phosphoserine; by PKA" evidence="2">
    <location>
        <position position="346"/>
    </location>
</feature>
<feature type="modified residue" description="Phosphoserine; by BARK" evidence="7">
    <location>
        <position position="355"/>
    </location>
</feature>
<feature type="modified residue" description="Phosphoserine; by BARK" evidence="7">
    <location>
        <position position="356"/>
    </location>
</feature>
<feature type="modified residue" description="4-hydroxyproline" evidence="1">
    <location>
        <position position="387"/>
    </location>
</feature>
<feature type="modified residue" description="4-hydroxyproline" evidence="1">
    <location>
        <position position="400"/>
    </location>
</feature>
<feature type="lipid moiety-binding region" description="S-palmitoyl cysteine" evidence="2">
    <location>
        <position position="265"/>
    </location>
</feature>
<feature type="lipid moiety-binding region" description="S-palmitoyl cysteine" evidence="2">
    <location>
        <position position="341"/>
    </location>
</feature>
<feature type="glycosylation site" description="N-linked (GlcNAc...) asparagine" evidence="7">
    <location>
        <position position="6"/>
    </location>
</feature>
<feature type="glycosylation site" description="N-linked (GlcNAc...) asparagine" evidence="7">
    <location>
        <position position="15"/>
    </location>
</feature>
<feature type="disulfide bond" evidence="4">
    <location>
        <begin position="106"/>
        <end position="191"/>
    </location>
</feature>
<feature type="disulfide bond" evidence="4">
    <location>
        <begin position="184"/>
        <end position="190"/>
    </location>
</feature>
<feature type="sequence conflict" description="In Ref. 2; CAA33664." evidence="7" ref="2">
    <original>D</original>
    <variation>H</variation>
    <location>
        <position position="21"/>
    </location>
</feature>
<feature type="sequence conflict" description="In Ref. 2; CAA33664." evidence="7" ref="2">
    <original>IL</original>
    <variation>TS</variation>
    <location>
        <begin position="94"/>
        <end position="95"/>
    </location>
</feature>
<feature type="sequence conflict" description="In Ref. 2; CAA33664." evidence="7" ref="2">
    <original>S</original>
    <variation>T</variation>
    <location>
        <position position="254"/>
    </location>
</feature>
<feature type="sequence conflict" description="In Ref. 2; CAA33664." evidence="7" ref="2">
    <original>SK</original>
    <variation>FE</variation>
    <location>
        <begin position="347"/>
        <end position="348"/>
    </location>
</feature>
<name>ADRB2_MOUSE</name>
<protein>
    <recommendedName>
        <fullName>Beta-2 adrenergic receptor</fullName>
    </recommendedName>
    <alternativeName>
        <fullName>Beta-2 adrenoreceptor</fullName>
        <shortName>Beta-2 adrenoceptor</shortName>
    </alternativeName>
</protein>
<keyword id="KW-1003">Cell membrane</keyword>
<keyword id="KW-1015">Disulfide bond</keyword>
<keyword id="KW-0967">Endosome</keyword>
<keyword id="KW-0297">G-protein coupled receptor</keyword>
<keyword id="KW-0325">Glycoprotein</keyword>
<keyword id="KW-0333">Golgi apparatus</keyword>
<keyword id="KW-0379">Hydroxylation</keyword>
<keyword id="KW-0449">Lipoprotein</keyword>
<keyword id="KW-0472">Membrane</keyword>
<keyword id="KW-0564">Palmitate</keyword>
<keyword id="KW-0597">Phosphoprotein</keyword>
<keyword id="KW-0675">Receptor</keyword>
<keyword id="KW-1185">Reference proteome</keyword>
<keyword id="KW-0807">Transducer</keyword>
<keyword id="KW-0812">Transmembrane</keyword>
<keyword id="KW-1133">Transmembrane helix</keyword>
<keyword id="KW-0832">Ubl conjugation</keyword>
<comment type="function">
    <text evidence="6">Beta-adrenergic receptors mediate the catecholamine-induced activation of adenylate cyclase through the action of G proteins. The beta-2-adrenergic receptor binds epinephrine with an approximately 30-fold greater affinity than it does norepinephrine.</text>
</comment>
<comment type="subunit">
    <text evidence="2">Binds NHERF1 and GPRASP1. Interacts with ARRB1 and ARRB2. Interacts with SRC (By similarity). Interacts with USP20 and USP33 (By similarity). Interacts with VHL; the interaction, which is increased on hydroxylation of ADRB2, ubiquitinates ADRB2 leading to its degradation. Interacts with EGLN3; the interaction hydroxylates ADRB2 facilitating VHL-E3 ligase-mediated ubiquitination. Interacts (via PDZ-binding motif) with SNX27 (via PDZ domain); the interaction is required when endocytosed to prevent degradation in lysosomes and promote recycling to the plasma membrane. Interacts with CNIH4. Interacts with ARRDC3. Interacts with NEDD4 (By similarity). Interacts with MARCHF2 (By similarity).</text>
</comment>
<comment type="interaction">
    <interactant intactId="EBI-491143">
        <id>P18762</id>
    </interactant>
    <interactant intactId="EBI-7764182">
        <id>P34971</id>
        <label>Adrb1</label>
    </interactant>
    <organismsDiffer>false</organismsDiffer>
    <experiments>2</experiments>
</comment>
<comment type="interaction">
    <interactant intactId="EBI-491143">
        <id>P18762</id>
    </interactant>
    <interactant intactId="EBI-298576">
        <id>P51637</id>
        <label>Cav3</label>
    </interactant>
    <organismsDiffer>false</organismsDiffer>
    <experiments>2</experiments>
</comment>
<comment type="interaction">
    <interactant intactId="EBI-491143">
        <id>P18762</id>
    </interactant>
    <interactant intactId="EBI-2945468">
        <id>P70424</id>
        <label>Erbb2</label>
    </interactant>
    <organismsDiffer>false</organismsDiffer>
    <experiments>3</experiments>
</comment>
<comment type="subcellular location">
    <subcellularLocation>
        <location evidence="6">Cell membrane</location>
        <topology evidence="2">Multi-pass membrane protein</topology>
    </subcellularLocation>
    <subcellularLocation>
        <location evidence="2">Early endosome</location>
    </subcellularLocation>
    <subcellularLocation>
        <location evidence="2">Golgi apparatus</location>
    </subcellularLocation>
    <text evidence="2">Colocalizes with VHL at the cell membrane. Activated receptors are internalized into endosomes prior to their degradation in lysosomes. Activated receptors are also detected within the Golgi apparatus.</text>
</comment>
<comment type="PTM">
    <text evidence="1">Palmitoylated; may reduce accessibility of Ser-345 and Ser-346 by anchoring Cys-341 to the plasma membrane. Agonist stimulation promotes depalmitoylation and further allows Ser-345 and Ser-346 phosphorylation (By similarity).</text>
</comment>
<comment type="PTM">
    <text>Phosphorylated by PKA and BARK upon agonist stimulation, which mediates homologous desensitization of the receptor. PKA-mediated phosphorylation seems to facilitate phosphorylation by BARK.</text>
</comment>
<comment type="PTM">
    <text evidence="1">Phosphorylation of Tyr-141 is induced by insulin and leads to supersensitization of the receptor.</text>
</comment>
<comment type="PTM">
    <text evidence="1">Polyubiquitinated. Agonist-induced ubiquitination leads to sort internalized receptors to the lysosomes for degradation. Deubiquitination by USP20 and USP33, leads to ADRB2 recycling and resensitization after prolonged agonist stimulation. USP20 and USP33 are constitutively associated and are dissociated immediately after agonist stimulation. Ubiquitination by the VHL-E3 ligase complex is oxygen-dependent (By similarity).</text>
</comment>
<comment type="PTM">
    <text evidence="1">Hydroxylation by EGLN3 occurs only under normoxia and increases the interaction with VHL and the subsequent ubiquitination and degradation of ADRB2.</text>
</comment>
<comment type="PTM">
    <text evidence="2">Palmitoylated. Mainly palmitoylated at Cys-341. Palmitoylation may reduce accessibility of phosphorylation sites by anchoring the receptor to the plasma membrane. Agonist stimulation promotes depalmitoylation and further allows Ser-345 and Ser-346 phosphorylation. Also undergoes transient, ligand-induced palmitoylation at Cys-265 probably by ZDHHC9, ZDHHC14 and ZDHHC18 within the Golgi. Palmitoylation at Cys-265 requires phosphorylation by PKA and receptor internalization and stabilizes the receptor. Could be depalmitoylated by LYPLA1 at the plasma membrane.</text>
</comment>
<comment type="similarity">
    <text evidence="4">Belongs to the G-protein coupled receptor 1 family. Adrenergic receptor subfamily. ADRB2 sub-subfamily.</text>
</comment>
<sequence>MGPHGNDSDFLLAPNGSRAPDHDVTQERDEAWVVGMAILMSVIVLAIVFGNVLVITAIAKFERLQTVTNYFIISLACADLVMGLAVVPFGASHILMKMWNFGNFWCEFWTSIDVLCVTASIETLCVIAVDRYVAITSPFKYQSLLTKNKARVVILMVWIVSGLTSFLPIQMHWYRATHKKAIDCYTEETCCDFFTNQAYAIASSIVSFYVPLVVMVFVYSRVFQVAKRQLQKIDKSEGRFHAQNLSQVEQDGRSGHGLRRSSKFCLKEHKALKTLGIIMGTFTLCWLPFFIVNIVHVIRDNLIPKEVYILLNWLGYVNSAFNPLIYCRSPDFRIAFQELLCLRRSSSKTYGNGYSSNSNGRTDYTGEPNTCQLGQEREQELLCEDPPGMEGFVNCQGTVPSLSVDSQGRNCSTNDSPL</sequence>
<accession>P18762</accession>
<accession>Q8BH38</accession>
<proteinExistence type="evidence at protein level"/>
<organism>
    <name type="scientific">Mus musculus</name>
    <name type="common">Mouse</name>
    <dbReference type="NCBI Taxonomy" id="10090"/>
    <lineage>
        <taxon>Eukaryota</taxon>
        <taxon>Metazoa</taxon>
        <taxon>Chordata</taxon>
        <taxon>Craniata</taxon>
        <taxon>Vertebrata</taxon>
        <taxon>Euteleostomi</taxon>
        <taxon>Mammalia</taxon>
        <taxon>Eutheria</taxon>
        <taxon>Euarchontoglires</taxon>
        <taxon>Glires</taxon>
        <taxon>Rodentia</taxon>
        <taxon>Myomorpha</taxon>
        <taxon>Muroidea</taxon>
        <taxon>Muridae</taxon>
        <taxon>Murinae</taxon>
        <taxon>Mus</taxon>
        <taxon>Mus</taxon>
    </lineage>
</organism>
<dbReference type="EMBL" id="X15643">
    <property type="protein sequence ID" value="CAA33664.1"/>
    <property type="molecule type" value="Genomic_DNA"/>
</dbReference>
<dbReference type="EMBL" id="AK080241">
    <property type="protein sequence ID" value="BAC37856.1"/>
    <property type="molecule type" value="mRNA"/>
</dbReference>
<dbReference type="EMBL" id="CH466528">
    <property type="protein sequence ID" value="EDL09746.1"/>
    <property type="molecule type" value="Genomic_DNA"/>
</dbReference>
<dbReference type="EMBL" id="BC032883">
    <property type="protein sequence ID" value="AAH32883.1"/>
    <property type="molecule type" value="mRNA"/>
</dbReference>
<dbReference type="CCDS" id="CCDS29289.1"/>
<dbReference type="PIR" id="S00260">
    <property type="entry name" value="S00260"/>
</dbReference>
<dbReference type="RefSeq" id="NP_031446.2">
    <property type="nucleotide sequence ID" value="NM_007420.3"/>
</dbReference>
<dbReference type="SMR" id="P18762"/>
<dbReference type="CORUM" id="P18762"/>
<dbReference type="DIP" id="DIP-59568N"/>
<dbReference type="FunCoup" id="P18762">
    <property type="interactions" value="1304"/>
</dbReference>
<dbReference type="IntAct" id="P18762">
    <property type="interactions" value="9"/>
</dbReference>
<dbReference type="MINT" id="P18762"/>
<dbReference type="STRING" id="10090.ENSMUSP00000062256"/>
<dbReference type="BindingDB" id="P18762"/>
<dbReference type="ChEMBL" id="CHEMBL3707"/>
<dbReference type="DrugCentral" id="P18762"/>
<dbReference type="GlyCosmos" id="P18762">
    <property type="glycosylation" value="2 sites, No reported glycans"/>
</dbReference>
<dbReference type="GlyGen" id="P18762">
    <property type="glycosylation" value="2 sites"/>
</dbReference>
<dbReference type="iPTMnet" id="P18762"/>
<dbReference type="PhosphoSitePlus" id="P18762"/>
<dbReference type="SwissPalm" id="P18762"/>
<dbReference type="jPOST" id="P18762"/>
<dbReference type="PaxDb" id="10090-ENSMUSP00000062256"/>
<dbReference type="ProteomicsDB" id="296071"/>
<dbReference type="Antibodypedia" id="15959">
    <property type="antibodies" value="1143 antibodies from 43 providers"/>
</dbReference>
<dbReference type="DNASU" id="11555"/>
<dbReference type="Ensembl" id="ENSMUST00000053640.5">
    <property type="protein sequence ID" value="ENSMUSP00000062256.4"/>
    <property type="gene ID" value="ENSMUSG00000045730.5"/>
</dbReference>
<dbReference type="GeneID" id="11555"/>
<dbReference type="KEGG" id="mmu:11555"/>
<dbReference type="UCSC" id="uc008fcy.2">
    <property type="organism name" value="mouse"/>
</dbReference>
<dbReference type="AGR" id="MGI:87938"/>
<dbReference type="CTD" id="154"/>
<dbReference type="MGI" id="MGI:87938">
    <property type="gene designation" value="Adrb2"/>
</dbReference>
<dbReference type="VEuPathDB" id="HostDB:ENSMUSG00000045730"/>
<dbReference type="eggNOG" id="KOG3656">
    <property type="taxonomic scope" value="Eukaryota"/>
</dbReference>
<dbReference type="GeneTree" id="ENSGT00940000159538"/>
<dbReference type="HOGENOM" id="CLU_009579_11_0_1"/>
<dbReference type="InParanoid" id="P18762"/>
<dbReference type="OMA" id="EGHIRTQ"/>
<dbReference type="OrthoDB" id="5975661at2759"/>
<dbReference type="PhylomeDB" id="P18762"/>
<dbReference type="TreeFam" id="TF316350"/>
<dbReference type="Reactome" id="R-MMU-390696">
    <property type="pathway name" value="Adrenoceptors"/>
</dbReference>
<dbReference type="Reactome" id="R-MMU-418555">
    <property type="pathway name" value="G alpha (s) signalling events"/>
</dbReference>
<dbReference type="Reactome" id="R-MMU-5689880">
    <property type="pathway name" value="Ub-specific processing proteases"/>
</dbReference>
<dbReference type="Reactome" id="R-MMU-8856825">
    <property type="pathway name" value="Cargo recognition for clathrin-mediated endocytosis"/>
</dbReference>
<dbReference type="Reactome" id="R-MMU-8856828">
    <property type="pathway name" value="Clathrin-mediated endocytosis"/>
</dbReference>
<dbReference type="BioGRID-ORCS" id="11555">
    <property type="hits" value="1 hit in 79 CRISPR screens"/>
</dbReference>
<dbReference type="ChiTaRS" id="Adrb2">
    <property type="organism name" value="mouse"/>
</dbReference>
<dbReference type="PRO" id="PR:P18762"/>
<dbReference type="Proteomes" id="UP000000589">
    <property type="component" value="Chromosome 18"/>
</dbReference>
<dbReference type="RNAct" id="P18762">
    <property type="molecule type" value="protein"/>
</dbReference>
<dbReference type="Bgee" id="ENSMUSG00000045730">
    <property type="expression patterns" value="Expressed in granulocyte and 139 other cell types or tissues"/>
</dbReference>
<dbReference type="GO" id="GO:0016324">
    <property type="term" value="C:apical plasma membrane"/>
    <property type="evidence" value="ECO:0000314"/>
    <property type="project" value="MGI"/>
</dbReference>
<dbReference type="GO" id="GO:0036064">
    <property type="term" value="C:ciliary basal body"/>
    <property type="evidence" value="ECO:0007669"/>
    <property type="project" value="Ensembl"/>
</dbReference>
<dbReference type="GO" id="GO:0005769">
    <property type="term" value="C:early endosome"/>
    <property type="evidence" value="ECO:0007669"/>
    <property type="project" value="UniProtKB-SubCell"/>
</dbReference>
<dbReference type="GO" id="GO:0005794">
    <property type="term" value="C:Golgi apparatus"/>
    <property type="evidence" value="ECO:0007669"/>
    <property type="project" value="UniProtKB-SubCell"/>
</dbReference>
<dbReference type="GO" id="GO:0045171">
    <property type="term" value="C:intercellular bridge"/>
    <property type="evidence" value="ECO:0007669"/>
    <property type="project" value="Ensembl"/>
</dbReference>
<dbReference type="GO" id="GO:0016020">
    <property type="term" value="C:membrane"/>
    <property type="evidence" value="ECO:0000314"/>
    <property type="project" value="MGI"/>
</dbReference>
<dbReference type="GO" id="GO:0072686">
    <property type="term" value="C:mitotic spindle"/>
    <property type="evidence" value="ECO:0007669"/>
    <property type="project" value="Ensembl"/>
</dbReference>
<dbReference type="GO" id="GO:0098992">
    <property type="term" value="C:neuronal dense core vesicle"/>
    <property type="evidence" value="ECO:0000314"/>
    <property type="project" value="SynGO"/>
</dbReference>
<dbReference type="GO" id="GO:0005634">
    <property type="term" value="C:nucleus"/>
    <property type="evidence" value="ECO:0000314"/>
    <property type="project" value="MGI"/>
</dbReference>
<dbReference type="GO" id="GO:0005886">
    <property type="term" value="C:plasma membrane"/>
    <property type="evidence" value="ECO:0000266"/>
    <property type="project" value="MGI"/>
</dbReference>
<dbReference type="GO" id="GO:0043235">
    <property type="term" value="C:receptor complex"/>
    <property type="evidence" value="ECO:0000250"/>
    <property type="project" value="HGNC-UCL"/>
</dbReference>
<dbReference type="GO" id="GO:0008179">
    <property type="term" value="F:adenylate cyclase binding"/>
    <property type="evidence" value="ECO:0000314"/>
    <property type="project" value="BHF-UCL"/>
</dbReference>
<dbReference type="GO" id="GO:0001540">
    <property type="term" value="F:amyloid-beta binding"/>
    <property type="evidence" value="ECO:0007669"/>
    <property type="project" value="Ensembl"/>
</dbReference>
<dbReference type="GO" id="GO:0004941">
    <property type="term" value="F:beta2-adrenergic receptor activity"/>
    <property type="evidence" value="ECO:0000314"/>
    <property type="project" value="MGI"/>
</dbReference>
<dbReference type="GO" id="GO:0019899">
    <property type="term" value="F:enzyme binding"/>
    <property type="evidence" value="ECO:0000353"/>
    <property type="project" value="BHF-UCL"/>
</dbReference>
<dbReference type="GO" id="GO:0051380">
    <property type="term" value="F:norepinephrine binding"/>
    <property type="evidence" value="ECO:0000250"/>
    <property type="project" value="HGNC-UCL"/>
</dbReference>
<dbReference type="GO" id="GO:0015459">
    <property type="term" value="F:potassium channel regulator activity"/>
    <property type="evidence" value="ECO:0007669"/>
    <property type="project" value="Ensembl"/>
</dbReference>
<dbReference type="GO" id="GO:0042803">
    <property type="term" value="F:protein homodimerization activity"/>
    <property type="evidence" value="ECO:0000250"/>
    <property type="project" value="HGNC-UCL"/>
</dbReference>
<dbReference type="GO" id="GO:0044877">
    <property type="term" value="F:protein-containing complex binding"/>
    <property type="evidence" value="ECO:0007669"/>
    <property type="project" value="Ensembl"/>
</dbReference>
<dbReference type="GO" id="GO:0071880">
    <property type="term" value="P:adenylate cyclase-activating adrenergic receptor signaling pathway"/>
    <property type="evidence" value="ECO:0000250"/>
    <property type="project" value="HGNC-UCL"/>
</dbReference>
<dbReference type="GO" id="GO:0007189">
    <property type="term" value="P:adenylate cyclase-activating G protein-coupled receptor signaling pathway"/>
    <property type="evidence" value="ECO:0000314"/>
    <property type="project" value="MGI"/>
</dbReference>
<dbReference type="GO" id="GO:0098990">
    <property type="term" value="P:AMPA selective glutamate receptor signaling pathway"/>
    <property type="evidence" value="ECO:0007669"/>
    <property type="project" value="Ensembl"/>
</dbReference>
<dbReference type="GO" id="GO:0045453">
    <property type="term" value="P:bone resorption"/>
    <property type="evidence" value="ECO:0000315"/>
    <property type="project" value="MGI"/>
</dbReference>
<dbReference type="GO" id="GO:0050873">
    <property type="term" value="P:brown fat cell differentiation"/>
    <property type="evidence" value="ECO:0000316"/>
    <property type="project" value="MGI"/>
</dbReference>
<dbReference type="GO" id="GO:1904646">
    <property type="term" value="P:cellular response to amyloid-beta"/>
    <property type="evidence" value="ECO:0000316"/>
    <property type="project" value="ARUK-UCL"/>
</dbReference>
<dbReference type="GO" id="GO:0002024">
    <property type="term" value="P:diet induced thermogenesis"/>
    <property type="evidence" value="ECO:0000316"/>
    <property type="project" value="MGI"/>
</dbReference>
<dbReference type="GO" id="GO:0031649">
    <property type="term" value="P:heat generation"/>
    <property type="evidence" value="ECO:0000316"/>
    <property type="project" value="MGI"/>
</dbReference>
<dbReference type="GO" id="GO:0045744">
    <property type="term" value="P:negative regulation of G protein-coupled receptor signaling pathway"/>
    <property type="evidence" value="ECO:0000250"/>
    <property type="project" value="HGNC-UCL"/>
</dbReference>
<dbReference type="GO" id="GO:0040015">
    <property type="term" value="P:negative regulation of multicellular organism growth"/>
    <property type="evidence" value="ECO:0000316"/>
    <property type="project" value="MGI"/>
</dbReference>
<dbReference type="GO" id="GO:0045986">
    <property type="term" value="P:negative regulation of smooth muscle contraction"/>
    <property type="evidence" value="ECO:0000316"/>
    <property type="project" value="MGI"/>
</dbReference>
<dbReference type="GO" id="GO:0002025">
    <property type="term" value="P:norepinephrine-epinephrine-mediated vasodilation involved in regulation of systemic arterial blood pressure"/>
    <property type="evidence" value="ECO:0000315"/>
    <property type="project" value="MGI"/>
</dbReference>
<dbReference type="GO" id="GO:1901098">
    <property type="term" value="P:positive regulation of autophagosome maturation"/>
    <property type="evidence" value="ECO:0000250"/>
    <property type="project" value="GO_Central"/>
</dbReference>
<dbReference type="GO" id="GO:0030501">
    <property type="term" value="P:positive regulation of bone mineralization"/>
    <property type="evidence" value="ECO:0000315"/>
    <property type="project" value="MGI"/>
</dbReference>
<dbReference type="GO" id="GO:0141163">
    <property type="term" value="P:positive regulation of cAMP/PKA signal transduction"/>
    <property type="evidence" value="ECO:0000316"/>
    <property type="project" value="ARUK-UCL"/>
</dbReference>
<dbReference type="GO" id="GO:0120162">
    <property type="term" value="P:positive regulation of cold-induced thermogenesis"/>
    <property type="evidence" value="ECO:0000316"/>
    <property type="project" value="YuBioLab"/>
</dbReference>
<dbReference type="GO" id="GO:1904504">
    <property type="term" value="P:positive regulation of lipophagy"/>
    <property type="evidence" value="ECO:0000250"/>
    <property type="project" value="GO_Central"/>
</dbReference>
<dbReference type="GO" id="GO:0043410">
    <property type="term" value="P:positive regulation of MAPK cascade"/>
    <property type="evidence" value="ECO:0000250"/>
    <property type="project" value="HGNC-UCL"/>
</dbReference>
<dbReference type="GO" id="GO:0061885">
    <property type="term" value="P:positive regulation of mini excitatory postsynaptic potential"/>
    <property type="evidence" value="ECO:0000316"/>
    <property type="project" value="ARUK-UCL"/>
</dbReference>
<dbReference type="GO" id="GO:0045944">
    <property type="term" value="P:positive regulation of transcription by RNA polymerase II"/>
    <property type="evidence" value="ECO:0000316"/>
    <property type="project" value="MGI"/>
</dbReference>
<dbReference type="GO" id="GO:0006898">
    <property type="term" value="P:receptor-mediated endocytosis"/>
    <property type="evidence" value="ECO:0000250"/>
    <property type="project" value="HGNC-UCL"/>
</dbReference>
<dbReference type="GO" id="GO:0002028">
    <property type="term" value="P:regulation of sodium ion transport"/>
    <property type="evidence" value="ECO:0000315"/>
    <property type="project" value="MGI"/>
</dbReference>
<dbReference type="GO" id="GO:0001993">
    <property type="term" value="P:regulation of systemic arterial blood pressure by norepinephrine-epinephrine"/>
    <property type="evidence" value="ECO:0000315"/>
    <property type="project" value="MGI"/>
</dbReference>
<dbReference type="GO" id="GO:0009409">
    <property type="term" value="P:response to cold"/>
    <property type="evidence" value="ECO:0000316"/>
    <property type="project" value="MGI"/>
</dbReference>
<dbReference type="GO" id="GO:0006939">
    <property type="term" value="P:smooth muscle contraction"/>
    <property type="evidence" value="ECO:0000316"/>
    <property type="project" value="MGI"/>
</dbReference>
<dbReference type="GO" id="GO:0006366">
    <property type="term" value="P:transcription by RNA polymerase II"/>
    <property type="evidence" value="ECO:0000316"/>
    <property type="project" value="MGI"/>
</dbReference>
<dbReference type="CDD" id="cd15957">
    <property type="entry name" value="7tmA_Beta2_AR"/>
    <property type="match status" value="1"/>
</dbReference>
<dbReference type="FunFam" id="1.20.1070.10:FF:000057">
    <property type="entry name" value="Beta-1 adrenergic receptor"/>
    <property type="match status" value="1"/>
</dbReference>
<dbReference type="Gene3D" id="1.20.1070.10">
    <property type="entry name" value="Rhodopsin 7-helix transmembrane proteins"/>
    <property type="match status" value="1"/>
</dbReference>
<dbReference type="InterPro" id="IPR002233">
    <property type="entry name" value="ADR_fam"/>
</dbReference>
<dbReference type="InterPro" id="IPR000332">
    <property type="entry name" value="ADRB2_rcpt"/>
</dbReference>
<dbReference type="InterPro" id="IPR000276">
    <property type="entry name" value="GPCR_Rhodpsn"/>
</dbReference>
<dbReference type="InterPro" id="IPR017452">
    <property type="entry name" value="GPCR_Rhodpsn_7TM"/>
</dbReference>
<dbReference type="PANTHER" id="PTHR24248">
    <property type="entry name" value="ADRENERGIC RECEPTOR-RELATED G-PROTEIN COUPLED RECEPTOR"/>
    <property type="match status" value="1"/>
</dbReference>
<dbReference type="PANTHER" id="PTHR24248:SF21">
    <property type="entry name" value="BETA-2 ADRENERGIC RECEPTOR"/>
    <property type="match status" value="1"/>
</dbReference>
<dbReference type="Pfam" id="PF00001">
    <property type="entry name" value="7tm_1"/>
    <property type="match status" value="1"/>
</dbReference>
<dbReference type="PRINTS" id="PR01103">
    <property type="entry name" value="ADRENERGICR"/>
</dbReference>
<dbReference type="PRINTS" id="PR00562">
    <property type="entry name" value="ADRENRGCB2AR"/>
</dbReference>
<dbReference type="PRINTS" id="PR00237">
    <property type="entry name" value="GPCRRHODOPSN"/>
</dbReference>
<dbReference type="SMART" id="SM01381">
    <property type="entry name" value="7TM_GPCR_Srsx"/>
    <property type="match status" value="1"/>
</dbReference>
<dbReference type="SUPFAM" id="SSF81321">
    <property type="entry name" value="Family A G protein-coupled receptor-like"/>
    <property type="match status" value="1"/>
</dbReference>
<dbReference type="PROSITE" id="PS00237">
    <property type="entry name" value="G_PROTEIN_RECEP_F1_1"/>
    <property type="match status" value="1"/>
</dbReference>
<dbReference type="PROSITE" id="PS50262">
    <property type="entry name" value="G_PROTEIN_RECEP_F1_2"/>
    <property type="match status" value="1"/>
</dbReference>
<gene>
    <name type="primary">Adrb2</name>
    <name type="synonym">Adrb2r</name>
</gene>
<evidence type="ECO:0000250" key="1"/>
<evidence type="ECO:0000250" key="2">
    <source>
        <dbReference type="UniProtKB" id="P07550"/>
    </source>
</evidence>
<evidence type="ECO:0000255" key="3"/>
<evidence type="ECO:0000255" key="4">
    <source>
        <dbReference type="PROSITE-ProRule" id="PRU00521"/>
    </source>
</evidence>
<evidence type="ECO:0000256" key="5">
    <source>
        <dbReference type="SAM" id="MobiDB-lite"/>
    </source>
</evidence>
<evidence type="ECO:0000269" key="6">
    <source>
    </source>
</evidence>
<evidence type="ECO:0000305" key="7"/>
<reference key="1">
    <citation type="journal article" date="1988" name="EMBO J.">
        <title>Isoproterenol response following transfection of the mouse beta 2-adrenergic receptor gene into Y1 cells.</title>
        <authorList>
            <person name="Allen J.M."/>
            <person name="Baetge E.E."/>
            <person name="Abrass I.B."/>
            <person name="Palmiter R.D."/>
        </authorList>
    </citation>
    <scope>NUCLEOTIDE SEQUENCE [GENOMIC DNA]</scope>
    <scope>FUNCTION</scope>
    <scope>SUBCELLULAR LOCATION</scope>
</reference>
<reference key="2">
    <citation type="journal article" date="1989" name="Biochem. J.">
        <title>Genetic regulation of beta 2-adrenergic receptors in 3T3-L1 fibroblasts.</title>
        <authorList>
            <person name="Nakada M.T."/>
            <person name="Haskell K.M."/>
            <person name="Ecker D.J."/>
            <person name="Stadel J.M."/>
            <person name="Crooke S.T."/>
        </authorList>
    </citation>
    <scope>NUCLEOTIDE SEQUENCE [GENOMIC DNA]</scope>
</reference>
<reference key="3">
    <citation type="journal article" date="2005" name="Science">
        <title>The transcriptional landscape of the mammalian genome.</title>
        <authorList>
            <person name="Carninci P."/>
            <person name="Kasukawa T."/>
            <person name="Katayama S."/>
            <person name="Gough J."/>
            <person name="Frith M.C."/>
            <person name="Maeda N."/>
            <person name="Oyama R."/>
            <person name="Ravasi T."/>
            <person name="Lenhard B."/>
            <person name="Wells C."/>
            <person name="Kodzius R."/>
            <person name="Shimokawa K."/>
            <person name="Bajic V.B."/>
            <person name="Brenner S.E."/>
            <person name="Batalov S."/>
            <person name="Forrest A.R."/>
            <person name="Zavolan M."/>
            <person name="Davis M.J."/>
            <person name="Wilming L.G."/>
            <person name="Aidinis V."/>
            <person name="Allen J.E."/>
            <person name="Ambesi-Impiombato A."/>
            <person name="Apweiler R."/>
            <person name="Aturaliya R.N."/>
            <person name="Bailey T.L."/>
            <person name="Bansal M."/>
            <person name="Baxter L."/>
            <person name="Beisel K.W."/>
            <person name="Bersano T."/>
            <person name="Bono H."/>
            <person name="Chalk A.M."/>
            <person name="Chiu K.P."/>
            <person name="Choudhary V."/>
            <person name="Christoffels A."/>
            <person name="Clutterbuck D.R."/>
            <person name="Crowe M.L."/>
            <person name="Dalla E."/>
            <person name="Dalrymple B.P."/>
            <person name="de Bono B."/>
            <person name="Della Gatta G."/>
            <person name="di Bernardo D."/>
            <person name="Down T."/>
            <person name="Engstrom P."/>
            <person name="Fagiolini M."/>
            <person name="Faulkner G."/>
            <person name="Fletcher C.F."/>
            <person name="Fukushima T."/>
            <person name="Furuno M."/>
            <person name="Futaki S."/>
            <person name="Gariboldi M."/>
            <person name="Georgii-Hemming P."/>
            <person name="Gingeras T.R."/>
            <person name="Gojobori T."/>
            <person name="Green R.E."/>
            <person name="Gustincich S."/>
            <person name="Harbers M."/>
            <person name="Hayashi Y."/>
            <person name="Hensch T.K."/>
            <person name="Hirokawa N."/>
            <person name="Hill D."/>
            <person name="Huminiecki L."/>
            <person name="Iacono M."/>
            <person name="Ikeo K."/>
            <person name="Iwama A."/>
            <person name="Ishikawa T."/>
            <person name="Jakt M."/>
            <person name="Kanapin A."/>
            <person name="Katoh M."/>
            <person name="Kawasawa Y."/>
            <person name="Kelso J."/>
            <person name="Kitamura H."/>
            <person name="Kitano H."/>
            <person name="Kollias G."/>
            <person name="Krishnan S.P."/>
            <person name="Kruger A."/>
            <person name="Kummerfeld S.K."/>
            <person name="Kurochkin I.V."/>
            <person name="Lareau L.F."/>
            <person name="Lazarevic D."/>
            <person name="Lipovich L."/>
            <person name="Liu J."/>
            <person name="Liuni S."/>
            <person name="McWilliam S."/>
            <person name="Madan Babu M."/>
            <person name="Madera M."/>
            <person name="Marchionni L."/>
            <person name="Matsuda H."/>
            <person name="Matsuzawa S."/>
            <person name="Miki H."/>
            <person name="Mignone F."/>
            <person name="Miyake S."/>
            <person name="Morris K."/>
            <person name="Mottagui-Tabar S."/>
            <person name="Mulder N."/>
            <person name="Nakano N."/>
            <person name="Nakauchi H."/>
            <person name="Ng P."/>
            <person name="Nilsson R."/>
            <person name="Nishiguchi S."/>
            <person name="Nishikawa S."/>
            <person name="Nori F."/>
            <person name="Ohara O."/>
            <person name="Okazaki Y."/>
            <person name="Orlando V."/>
            <person name="Pang K.C."/>
            <person name="Pavan W.J."/>
            <person name="Pavesi G."/>
            <person name="Pesole G."/>
            <person name="Petrovsky N."/>
            <person name="Piazza S."/>
            <person name="Reed J."/>
            <person name="Reid J.F."/>
            <person name="Ring B.Z."/>
            <person name="Ringwald M."/>
            <person name="Rost B."/>
            <person name="Ruan Y."/>
            <person name="Salzberg S.L."/>
            <person name="Sandelin A."/>
            <person name="Schneider C."/>
            <person name="Schoenbach C."/>
            <person name="Sekiguchi K."/>
            <person name="Semple C.A."/>
            <person name="Seno S."/>
            <person name="Sessa L."/>
            <person name="Sheng Y."/>
            <person name="Shibata Y."/>
            <person name="Shimada H."/>
            <person name="Shimada K."/>
            <person name="Silva D."/>
            <person name="Sinclair B."/>
            <person name="Sperling S."/>
            <person name="Stupka E."/>
            <person name="Sugiura K."/>
            <person name="Sultana R."/>
            <person name="Takenaka Y."/>
            <person name="Taki K."/>
            <person name="Tammoja K."/>
            <person name="Tan S.L."/>
            <person name="Tang S."/>
            <person name="Taylor M.S."/>
            <person name="Tegner J."/>
            <person name="Teichmann S.A."/>
            <person name="Ueda H.R."/>
            <person name="van Nimwegen E."/>
            <person name="Verardo R."/>
            <person name="Wei C.L."/>
            <person name="Yagi K."/>
            <person name="Yamanishi H."/>
            <person name="Zabarovsky E."/>
            <person name="Zhu S."/>
            <person name="Zimmer A."/>
            <person name="Hide W."/>
            <person name="Bult C."/>
            <person name="Grimmond S.M."/>
            <person name="Teasdale R.D."/>
            <person name="Liu E.T."/>
            <person name="Brusic V."/>
            <person name="Quackenbush J."/>
            <person name="Wahlestedt C."/>
            <person name="Mattick J.S."/>
            <person name="Hume D.A."/>
            <person name="Kai C."/>
            <person name="Sasaki D."/>
            <person name="Tomaru Y."/>
            <person name="Fukuda S."/>
            <person name="Kanamori-Katayama M."/>
            <person name="Suzuki M."/>
            <person name="Aoki J."/>
            <person name="Arakawa T."/>
            <person name="Iida J."/>
            <person name="Imamura K."/>
            <person name="Itoh M."/>
            <person name="Kato T."/>
            <person name="Kawaji H."/>
            <person name="Kawagashira N."/>
            <person name="Kawashima T."/>
            <person name="Kojima M."/>
            <person name="Kondo S."/>
            <person name="Konno H."/>
            <person name="Nakano K."/>
            <person name="Ninomiya N."/>
            <person name="Nishio T."/>
            <person name="Okada M."/>
            <person name="Plessy C."/>
            <person name="Shibata K."/>
            <person name="Shiraki T."/>
            <person name="Suzuki S."/>
            <person name="Tagami M."/>
            <person name="Waki K."/>
            <person name="Watahiki A."/>
            <person name="Okamura-Oho Y."/>
            <person name="Suzuki H."/>
            <person name="Kawai J."/>
            <person name="Hayashizaki Y."/>
        </authorList>
    </citation>
    <scope>NUCLEOTIDE SEQUENCE [LARGE SCALE MRNA]</scope>
</reference>
<reference key="4">
    <citation type="submission" date="2005-09" db="EMBL/GenBank/DDBJ databases">
        <authorList>
            <person name="Mural R.J."/>
            <person name="Adams M.D."/>
            <person name="Myers E.W."/>
            <person name="Smith H.O."/>
            <person name="Venter J.C."/>
        </authorList>
    </citation>
    <scope>NUCLEOTIDE SEQUENCE [LARGE SCALE GENOMIC DNA]</scope>
</reference>
<reference key="5">
    <citation type="journal article" date="2004" name="Genome Res.">
        <title>The status, quality, and expansion of the NIH full-length cDNA project: the Mammalian Gene Collection (MGC).</title>
        <authorList>
            <consortium name="The MGC Project Team"/>
        </authorList>
    </citation>
    <scope>NUCLEOTIDE SEQUENCE [LARGE SCALE MRNA]</scope>
    <source>
        <strain>C57BL/6J</strain>
        <tissue>Mammary gland</tissue>
    </source>
</reference>